<organism>
    <name type="scientific">Rattus norvegicus</name>
    <name type="common">Rat</name>
    <dbReference type="NCBI Taxonomy" id="10116"/>
    <lineage>
        <taxon>Eukaryota</taxon>
        <taxon>Metazoa</taxon>
        <taxon>Chordata</taxon>
        <taxon>Craniata</taxon>
        <taxon>Vertebrata</taxon>
        <taxon>Euteleostomi</taxon>
        <taxon>Mammalia</taxon>
        <taxon>Eutheria</taxon>
        <taxon>Euarchontoglires</taxon>
        <taxon>Glires</taxon>
        <taxon>Rodentia</taxon>
        <taxon>Myomorpha</taxon>
        <taxon>Muroidea</taxon>
        <taxon>Muridae</taxon>
        <taxon>Murinae</taxon>
        <taxon>Rattus</taxon>
    </lineage>
</organism>
<sequence length="314" mass="35893">MNKDTTMYCSAYIRDVFFCEIGVGISANSCLLLFHIFMFIRGHRPRLTDLPIGLMALIHLLMLLLAAYIAKDFFMSSGWDDITCKLFIFLHRFFRSLSVCATCMLSVFQTIILCPQSSHLAKFKPNSPYHLSCFFIFMSIFYTSISSHILIAAIATQNLTSVNLIYITKSCSFLPMSSSMQRTFSTLLAFRNAFLIGLMGLSTCYMATLLCRHKTRSQRLQNSKLSPKATPEQRAIWTLLMFMSFFLVMSTFDSIISYSRTIFQGNPSLYCAQILVAHSYAVVSPMLVLSNENRLTNPLISMYERIVRLDFLCW</sequence>
<protein>
    <recommendedName>
        <fullName>Vomeronasal type-1 receptor 98</fullName>
    </recommendedName>
    <alternativeName>
        <fullName>Vomeronasal type-1 receptor A8</fullName>
    </alternativeName>
</protein>
<accession>Q5J3E5</accession>
<evidence type="ECO:0000250" key="1">
    <source>
        <dbReference type="UniProtKB" id="Q8VIC6"/>
    </source>
</evidence>
<evidence type="ECO:0000255" key="2"/>
<evidence type="ECO:0000255" key="3">
    <source>
        <dbReference type="PROSITE-ProRule" id="PRU00521"/>
    </source>
</evidence>
<evidence type="ECO:0000305" key="4"/>
<evidence type="ECO:0000312" key="5">
    <source>
        <dbReference type="EMBL" id="AAR88032.1"/>
    </source>
</evidence>
<gene>
    <name type="primary">Vom1r98</name>
    <name type="synonym">V1ra8</name>
</gene>
<reference evidence="5" key="1">
    <citation type="submission" date="2003-12" db="EMBL/GenBank/DDBJ databases">
        <title>Rat vomeronasal receptors.</title>
        <authorList>
            <person name="Capello L."/>
            <person name="Rodriguez I."/>
        </authorList>
    </citation>
    <scope>NUCLEOTIDE SEQUENCE [MRNA]</scope>
</reference>
<name>V1R98_RAT</name>
<keyword id="KW-1003">Cell membrane</keyword>
<keyword id="KW-1015">Disulfide bond</keyword>
<keyword id="KW-0297">G-protein coupled receptor</keyword>
<keyword id="KW-0325">Glycoprotein</keyword>
<keyword id="KW-0472">Membrane</keyword>
<keyword id="KW-0589">Pheromone response</keyword>
<keyword id="KW-0675">Receptor</keyword>
<keyword id="KW-1185">Reference proteome</keyword>
<keyword id="KW-0807">Transducer</keyword>
<keyword id="KW-0812">Transmembrane</keyword>
<keyword id="KW-1133">Transmembrane helix</keyword>
<dbReference type="EMBL" id="AY510365">
    <property type="protein sequence ID" value="AAR88032.1"/>
    <property type="molecule type" value="mRNA"/>
</dbReference>
<dbReference type="RefSeq" id="NP_001008948.1">
    <property type="nucleotide sequence ID" value="NM_001008948.1"/>
</dbReference>
<dbReference type="SMR" id="Q5J3E5"/>
<dbReference type="IntAct" id="Q5J3E5">
    <property type="interactions" value="1"/>
</dbReference>
<dbReference type="GlyCosmos" id="Q5J3E5">
    <property type="glycosylation" value="1 site, No reported glycans"/>
</dbReference>
<dbReference type="GlyGen" id="Q5J3E5">
    <property type="glycosylation" value="1 site"/>
</dbReference>
<dbReference type="PaxDb" id="10116-ENSRNOP00000038145"/>
<dbReference type="Ensembl" id="ENSRNOT00000104609.1">
    <property type="protein sequence ID" value="ENSRNOP00000078295.1"/>
    <property type="gene ID" value="ENSRNOG00000066943.1"/>
</dbReference>
<dbReference type="GeneID" id="494294"/>
<dbReference type="KEGG" id="rno:494294"/>
<dbReference type="AGR" id="RGD:1549694"/>
<dbReference type="RGD" id="1549694">
    <property type="gene designation" value="Vom1r98"/>
</dbReference>
<dbReference type="eggNOG" id="ENOG502SNRJ">
    <property type="taxonomic scope" value="Eukaryota"/>
</dbReference>
<dbReference type="GeneTree" id="ENSGT01030000234553"/>
<dbReference type="HOGENOM" id="CLU_058641_0_0_1"/>
<dbReference type="InParanoid" id="Q5J3E5"/>
<dbReference type="OMA" id="ITCKLIM"/>
<dbReference type="OrthoDB" id="9634176at2759"/>
<dbReference type="PhylomeDB" id="Q5J3E5"/>
<dbReference type="PRO" id="PR:Q5J3E5"/>
<dbReference type="Proteomes" id="UP000002494">
    <property type="component" value="Chromosome 4"/>
</dbReference>
<dbReference type="GO" id="GO:0005886">
    <property type="term" value="C:plasma membrane"/>
    <property type="evidence" value="ECO:0007669"/>
    <property type="project" value="UniProtKB-SubCell"/>
</dbReference>
<dbReference type="GO" id="GO:0016503">
    <property type="term" value="F:pheromone receptor activity"/>
    <property type="evidence" value="ECO:0007669"/>
    <property type="project" value="InterPro"/>
</dbReference>
<dbReference type="GO" id="GO:0019236">
    <property type="term" value="P:response to pheromone"/>
    <property type="evidence" value="ECO:0007669"/>
    <property type="project" value="UniProtKB-KW"/>
</dbReference>
<dbReference type="GO" id="GO:0007606">
    <property type="term" value="P:sensory perception of chemical stimulus"/>
    <property type="evidence" value="ECO:0007669"/>
    <property type="project" value="UniProtKB-ARBA"/>
</dbReference>
<dbReference type="CDD" id="cd13949">
    <property type="entry name" value="7tm_V1R_pheromone"/>
    <property type="match status" value="1"/>
</dbReference>
<dbReference type="FunFam" id="1.20.1070.10:FF:000051">
    <property type="entry name" value="Vomeronasal type-1 receptor"/>
    <property type="match status" value="1"/>
</dbReference>
<dbReference type="Gene3D" id="1.20.1070.10">
    <property type="entry name" value="Rhodopsin 7-helix transmembrane proteins"/>
    <property type="match status" value="1"/>
</dbReference>
<dbReference type="InterPro" id="IPR017452">
    <property type="entry name" value="GPCR_Rhodpsn_7TM"/>
</dbReference>
<dbReference type="InterPro" id="IPR004072">
    <property type="entry name" value="Vmron_rcpt_1"/>
</dbReference>
<dbReference type="PANTHER" id="PTHR24062">
    <property type="entry name" value="VOMERONASAL TYPE-1 RECEPTOR"/>
    <property type="match status" value="1"/>
</dbReference>
<dbReference type="Pfam" id="PF03402">
    <property type="entry name" value="V1R"/>
    <property type="match status" value="1"/>
</dbReference>
<dbReference type="PRINTS" id="PR01534">
    <property type="entry name" value="VOMERONASL1R"/>
</dbReference>
<dbReference type="SUPFAM" id="SSF81321">
    <property type="entry name" value="Family A G protein-coupled receptor-like"/>
    <property type="match status" value="1"/>
</dbReference>
<dbReference type="PROSITE" id="PS50262">
    <property type="entry name" value="G_PROTEIN_RECEP_F1_2"/>
    <property type="match status" value="1"/>
</dbReference>
<comment type="function">
    <text evidence="1">Putative pheromone receptor implicated in the regulation of social as well as reproductive behavior.</text>
</comment>
<comment type="subcellular location">
    <subcellularLocation>
        <location evidence="4">Cell membrane</location>
        <topology evidence="2">Multi-pass membrane protein</topology>
    </subcellularLocation>
</comment>
<comment type="similarity">
    <text evidence="3">Belongs to the G-protein coupled receptor 1 family.</text>
</comment>
<proteinExistence type="evidence at transcript level"/>
<feature type="chain" id="PRO_0000239965" description="Vomeronasal type-1 receptor 98">
    <location>
        <begin position="1"/>
        <end position="314"/>
    </location>
</feature>
<feature type="topological domain" description="Extracellular" evidence="2">
    <location>
        <begin position="1"/>
        <end position="19"/>
    </location>
</feature>
<feature type="transmembrane region" description="Helical; Name=1" evidence="2">
    <location>
        <begin position="20"/>
        <end position="40"/>
    </location>
</feature>
<feature type="topological domain" description="Cytoplasmic" evidence="2">
    <location>
        <begin position="41"/>
        <end position="49"/>
    </location>
</feature>
<feature type="transmembrane region" description="Helical; Name=2" evidence="2">
    <location>
        <begin position="50"/>
        <end position="70"/>
    </location>
</feature>
<feature type="topological domain" description="Extracellular" evidence="2">
    <location>
        <begin position="71"/>
        <end position="92"/>
    </location>
</feature>
<feature type="transmembrane region" description="Helical; Name=3" evidence="2">
    <location>
        <begin position="93"/>
        <end position="113"/>
    </location>
</feature>
<feature type="topological domain" description="Cytoplasmic" evidence="2">
    <location>
        <begin position="114"/>
        <end position="133"/>
    </location>
</feature>
<feature type="transmembrane region" description="Helical; Name=4" evidence="2">
    <location>
        <begin position="134"/>
        <end position="154"/>
    </location>
</feature>
<feature type="topological domain" description="Extracellular" evidence="2">
    <location>
        <begin position="155"/>
        <end position="186"/>
    </location>
</feature>
<feature type="transmembrane region" description="Helical; Name=5" evidence="2">
    <location>
        <begin position="187"/>
        <end position="207"/>
    </location>
</feature>
<feature type="topological domain" description="Cytoplasmic" evidence="2">
    <location>
        <begin position="208"/>
        <end position="235"/>
    </location>
</feature>
<feature type="transmembrane region" description="Helical; Name=6" evidence="2">
    <location>
        <begin position="236"/>
        <end position="256"/>
    </location>
</feature>
<feature type="topological domain" description="Extracellular" evidence="2">
    <location>
        <begin position="257"/>
        <end position="268"/>
    </location>
</feature>
<feature type="transmembrane region" description="Helical; Name=7" evidence="2">
    <location>
        <begin position="269"/>
        <end position="289"/>
    </location>
</feature>
<feature type="topological domain" description="Cytoplasmic" evidence="2">
    <location>
        <begin position="290"/>
        <end position="314"/>
    </location>
</feature>
<feature type="glycosylation site" description="N-linked (GlcNAc...) asparagine" evidence="2">
    <location>
        <position position="158"/>
    </location>
</feature>
<feature type="disulfide bond" evidence="3">
    <location>
        <begin position="84"/>
        <end position="171"/>
    </location>
</feature>